<accession>B4S0P9</accession>
<accession>F2G6Q6</accession>
<name>BIOB_ALTMD</name>
<sequence>MTLAYAPTAQTITIRNDWTKAEVEALFAMPFNDLLFNAQVVHRQHFNPNEVQVSTLLSIKTGACPEDCKYCPQSARYDTGLEKERLLEIEKVIQRAKEAKQVGSTRFCMGAAWRNPRDRDMPYILKMVEEVKSLGLETCMTLGMLTRDQAVALKQAGLDYYNHNLDTSPEYYGDIITTRTYEDRLNTLENVRAAGMNVCSGGIVGMGETVSDRASMLVQLANLPEQPQSVPINMLVKVKGTPLDSVEDLDYFEFIRTIAVARIMMPKSHVRLSAGREAMNEQMQAMCFMAGANSIFYGCKLLTTSNPDTHEDVMLFKKLGINTERTRDYSDEAHQQVLEEEIAQQQEQAEGSNDLFIDATKPKVAAKQQHATEA</sequence>
<reference key="1">
    <citation type="journal article" date="2008" name="ISME J.">
        <title>Comparative genomics of two ecotypes of the marine planktonic copiotroph Alteromonas macleodii suggests alternative lifestyles associated with different kinds of particulate organic matter.</title>
        <authorList>
            <person name="Ivars-Martinez E."/>
            <person name="Martin-Cuadrado A.-B."/>
            <person name="D'Auria G."/>
            <person name="Mira A."/>
            <person name="Ferriera S."/>
            <person name="Johnson J."/>
            <person name="Friedman R."/>
            <person name="Rodriguez-Valera F."/>
        </authorList>
    </citation>
    <scope>NUCLEOTIDE SEQUENCE [LARGE SCALE GENOMIC DNA]</scope>
    <source>
        <strain>DSM 17117 / CIP 110805 / LMG 28347 / Deep ecotype</strain>
    </source>
</reference>
<evidence type="ECO:0000255" key="1">
    <source>
        <dbReference type="HAMAP-Rule" id="MF_01694"/>
    </source>
</evidence>
<evidence type="ECO:0000255" key="2">
    <source>
        <dbReference type="PROSITE-ProRule" id="PRU01266"/>
    </source>
</evidence>
<evidence type="ECO:0000256" key="3">
    <source>
        <dbReference type="SAM" id="MobiDB-lite"/>
    </source>
</evidence>
<gene>
    <name evidence="1" type="primary">bioB</name>
    <name type="ordered locus">MADE_1007255</name>
</gene>
<protein>
    <recommendedName>
        <fullName evidence="1">Biotin synthase</fullName>
        <ecNumber evidence="1">2.8.1.6</ecNumber>
    </recommendedName>
</protein>
<feature type="chain" id="PRO_0000381194" description="Biotin synthase">
    <location>
        <begin position="1"/>
        <end position="374"/>
    </location>
</feature>
<feature type="domain" description="Radical SAM core" evidence="2">
    <location>
        <begin position="49"/>
        <end position="276"/>
    </location>
</feature>
<feature type="region of interest" description="Disordered" evidence="3">
    <location>
        <begin position="344"/>
        <end position="374"/>
    </location>
</feature>
<feature type="binding site" evidence="1">
    <location>
        <position position="64"/>
    </location>
    <ligand>
        <name>[4Fe-4S] cluster</name>
        <dbReference type="ChEBI" id="CHEBI:49883"/>
        <note>4Fe-4S-S-AdoMet</note>
    </ligand>
</feature>
<feature type="binding site" evidence="1">
    <location>
        <position position="68"/>
    </location>
    <ligand>
        <name>[4Fe-4S] cluster</name>
        <dbReference type="ChEBI" id="CHEBI:49883"/>
        <note>4Fe-4S-S-AdoMet</note>
    </ligand>
</feature>
<feature type="binding site" evidence="1">
    <location>
        <position position="71"/>
    </location>
    <ligand>
        <name>[4Fe-4S] cluster</name>
        <dbReference type="ChEBI" id="CHEBI:49883"/>
        <note>4Fe-4S-S-AdoMet</note>
    </ligand>
</feature>
<feature type="binding site" evidence="1">
    <location>
        <position position="108"/>
    </location>
    <ligand>
        <name>[2Fe-2S] cluster</name>
        <dbReference type="ChEBI" id="CHEBI:190135"/>
    </ligand>
</feature>
<feature type="binding site" evidence="1">
    <location>
        <position position="139"/>
    </location>
    <ligand>
        <name>[2Fe-2S] cluster</name>
        <dbReference type="ChEBI" id="CHEBI:190135"/>
    </ligand>
</feature>
<feature type="binding site" evidence="1">
    <location>
        <position position="199"/>
    </location>
    <ligand>
        <name>[2Fe-2S] cluster</name>
        <dbReference type="ChEBI" id="CHEBI:190135"/>
    </ligand>
</feature>
<feature type="binding site" evidence="1">
    <location>
        <position position="271"/>
    </location>
    <ligand>
        <name>[2Fe-2S] cluster</name>
        <dbReference type="ChEBI" id="CHEBI:190135"/>
    </ligand>
</feature>
<organism>
    <name type="scientific">Alteromonas mediterranea (strain DSM 17117 / CIP 110805 / LMG 28347 / Deep ecotype)</name>
    <dbReference type="NCBI Taxonomy" id="1774373"/>
    <lineage>
        <taxon>Bacteria</taxon>
        <taxon>Pseudomonadati</taxon>
        <taxon>Pseudomonadota</taxon>
        <taxon>Gammaproteobacteria</taxon>
        <taxon>Alteromonadales</taxon>
        <taxon>Alteromonadaceae</taxon>
        <taxon>Alteromonas/Salinimonas group</taxon>
        <taxon>Alteromonas</taxon>
    </lineage>
</organism>
<dbReference type="EC" id="2.8.1.6" evidence="1"/>
<dbReference type="EMBL" id="CP001103">
    <property type="protein sequence ID" value="AEA97593.1"/>
    <property type="molecule type" value="Genomic_DNA"/>
</dbReference>
<dbReference type="RefSeq" id="WP_012517935.1">
    <property type="nucleotide sequence ID" value="NC_011138.3"/>
</dbReference>
<dbReference type="SMR" id="B4S0P9"/>
<dbReference type="KEGG" id="amc:MADE_1007255"/>
<dbReference type="HOGENOM" id="CLU_033172_1_2_6"/>
<dbReference type="UniPathway" id="UPA00078">
    <property type="reaction ID" value="UER00162"/>
</dbReference>
<dbReference type="Proteomes" id="UP000001870">
    <property type="component" value="Chromosome"/>
</dbReference>
<dbReference type="GO" id="GO:0051537">
    <property type="term" value="F:2 iron, 2 sulfur cluster binding"/>
    <property type="evidence" value="ECO:0007669"/>
    <property type="project" value="UniProtKB-KW"/>
</dbReference>
<dbReference type="GO" id="GO:0051539">
    <property type="term" value="F:4 iron, 4 sulfur cluster binding"/>
    <property type="evidence" value="ECO:0007669"/>
    <property type="project" value="UniProtKB-KW"/>
</dbReference>
<dbReference type="GO" id="GO:0004076">
    <property type="term" value="F:biotin synthase activity"/>
    <property type="evidence" value="ECO:0007669"/>
    <property type="project" value="UniProtKB-UniRule"/>
</dbReference>
<dbReference type="GO" id="GO:0005506">
    <property type="term" value="F:iron ion binding"/>
    <property type="evidence" value="ECO:0007669"/>
    <property type="project" value="UniProtKB-UniRule"/>
</dbReference>
<dbReference type="GO" id="GO:0009102">
    <property type="term" value="P:biotin biosynthetic process"/>
    <property type="evidence" value="ECO:0007669"/>
    <property type="project" value="UniProtKB-UniRule"/>
</dbReference>
<dbReference type="CDD" id="cd01335">
    <property type="entry name" value="Radical_SAM"/>
    <property type="match status" value="1"/>
</dbReference>
<dbReference type="FunFam" id="3.20.20.70:FF:000011">
    <property type="entry name" value="Biotin synthase"/>
    <property type="match status" value="1"/>
</dbReference>
<dbReference type="Gene3D" id="3.20.20.70">
    <property type="entry name" value="Aldolase class I"/>
    <property type="match status" value="1"/>
</dbReference>
<dbReference type="HAMAP" id="MF_01694">
    <property type="entry name" value="BioB"/>
    <property type="match status" value="1"/>
</dbReference>
<dbReference type="InterPro" id="IPR013785">
    <property type="entry name" value="Aldolase_TIM"/>
</dbReference>
<dbReference type="InterPro" id="IPR010722">
    <property type="entry name" value="BATS_dom"/>
</dbReference>
<dbReference type="InterPro" id="IPR002684">
    <property type="entry name" value="Biotin_synth/BioAB"/>
</dbReference>
<dbReference type="InterPro" id="IPR024177">
    <property type="entry name" value="Biotin_synthase"/>
</dbReference>
<dbReference type="InterPro" id="IPR006638">
    <property type="entry name" value="Elp3/MiaA/NifB-like_rSAM"/>
</dbReference>
<dbReference type="InterPro" id="IPR007197">
    <property type="entry name" value="rSAM"/>
</dbReference>
<dbReference type="NCBIfam" id="TIGR00433">
    <property type="entry name" value="bioB"/>
    <property type="match status" value="1"/>
</dbReference>
<dbReference type="PANTHER" id="PTHR22976">
    <property type="entry name" value="BIOTIN SYNTHASE"/>
    <property type="match status" value="1"/>
</dbReference>
<dbReference type="PANTHER" id="PTHR22976:SF2">
    <property type="entry name" value="BIOTIN SYNTHASE, MITOCHONDRIAL"/>
    <property type="match status" value="1"/>
</dbReference>
<dbReference type="Pfam" id="PF06968">
    <property type="entry name" value="BATS"/>
    <property type="match status" value="1"/>
</dbReference>
<dbReference type="Pfam" id="PF04055">
    <property type="entry name" value="Radical_SAM"/>
    <property type="match status" value="1"/>
</dbReference>
<dbReference type="PIRSF" id="PIRSF001619">
    <property type="entry name" value="Biotin_synth"/>
    <property type="match status" value="1"/>
</dbReference>
<dbReference type="SFLD" id="SFLDF00272">
    <property type="entry name" value="biotin_synthase"/>
    <property type="match status" value="1"/>
</dbReference>
<dbReference type="SFLD" id="SFLDG01278">
    <property type="entry name" value="biotin_synthase_like"/>
    <property type="match status" value="1"/>
</dbReference>
<dbReference type="SMART" id="SM00876">
    <property type="entry name" value="BATS"/>
    <property type="match status" value="1"/>
</dbReference>
<dbReference type="SMART" id="SM00729">
    <property type="entry name" value="Elp3"/>
    <property type="match status" value="1"/>
</dbReference>
<dbReference type="SUPFAM" id="SSF102114">
    <property type="entry name" value="Radical SAM enzymes"/>
    <property type="match status" value="1"/>
</dbReference>
<dbReference type="PROSITE" id="PS51918">
    <property type="entry name" value="RADICAL_SAM"/>
    <property type="match status" value="1"/>
</dbReference>
<proteinExistence type="inferred from homology"/>
<comment type="function">
    <text evidence="1">Catalyzes the conversion of dethiobiotin (DTB) to biotin by the insertion of a sulfur atom into dethiobiotin via a radical-based mechanism.</text>
</comment>
<comment type="catalytic activity">
    <reaction evidence="1">
        <text>(4R,5S)-dethiobiotin + (sulfur carrier)-SH + 2 reduced [2Fe-2S]-[ferredoxin] + 2 S-adenosyl-L-methionine = (sulfur carrier)-H + biotin + 2 5'-deoxyadenosine + 2 L-methionine + 2 oxidized [2Fe-2S]-[ferredoxin]</text>
        <dbReference type="Rhea" id="RHEA:22060"/>
        <dbReference type="Rhea" id="RHEA-COMP:10000"/>
        <dbReference type="Rhea" id="RHEA-COMP:10001"/>
        <dbReference type="Rhea" id="RHEA-COMP:14737"/>
        <dbReference type="Rhea" id="RHEA-COMP:14739"/>
        <dbReference type="ChEBI" id="CHEBI:17319"/>
        <dbReference type="ChEBI" id="CHEBI:29917"/>
        <dbReference type="ChEBI" id="CHEBI:33737"/>
        <dbReference type="ChEBI" id="CHEBI:33738"/>
        <dbReference type="ChEBI" id="CHEBI:57586"/>
        <dbReference type="ChEBI" id="CHEBI:57844"/>
        <dbReference type="ChEBI" id="CHEBI:59789"/>
        <dbReference type="ChEBI" id="CHEBI:64428"/>
        <dbReference type="ChEBI" id="CHEBI:149473"/>
        <dbReference type="EC" id="2.8.1.6"/>
    </reaction>
</comment>
<comment type="cofactor">
    <cofactor evidence="1">
        <name>[4Fe-4S] cluster</name>
        <dbReference type="ChEBI" id="CHEBI:49883"/>
    </cofactor>
    <text evidence="1">Binds 1 [4Fe-4S] cluster. The cluster is coordinated with 3 cysteines and an exchangeable S-adenosyl-L-methionine.</text>
</comment>
<comment type="cofactor">
    <cofactor evidence="1">
        <name>[2Fe-2S] cluster</name>
        <dbReference type="ChEBI" id="CHEBI:190135"/>
    </cofactor>
    <text evidence="1">Binds 1 [2Fe-2S] cluster. The cluster is coordinated with 3 cysteines and 1 arginine.</text>
</comment>
<comment type="pathway">
    <text evidence="1">Cofactor biosynthesis; biotin biosynthesis; biotin from 7,8-diaminononanoate: step 2/2.</text>
</comment>
<comment type="subunit">
    <text evidence="1">Homodimer.</text>
</comment>
<comment type="similarity">
    <text evidence="1">Belongs to the radical SAM superfamily. Biotin synthase family.</text>
</comment>
<keyword id="KW-0001">2Fe-2S</keyword>
<keyword id="KW-0004">4Fe-4S</keyword>
<keyword id="KW-0093">Biotin biosynthesis</keyword>
<keyword id="KW-0408">Iron</keyword>
<keyword id="KW-0411">Iron-sulfur</keyword>
<keyword id="KW-0479">Metal-binding</keyword>
<keyword id="KW-0949">S-adenosyl-L-methionine</keyword>
<keyword id="KW-0808">Transferase</keyword>